<reference key="1">
    <citation type="journal article" date="1998" name="Nature">
        <title>Deciphering the biology of Mycobacterium tuberculosis from the complete genome sequence.</title>
        <authorList>
            <person name="Cole S.T."/>
            <person name="Brosch R."/>
            <person name="Parkhill J."/>
            <person name="Garnier T."/>
            <person name="Churcher C.M."/>
            <person name="Harris D.E."/>
            <person name="Gordon S.V."/>
            <person name="Eiglmeier K."/>
            <person name="Gas S."/>
            <person name="Barry C.E. III"/>
            <person name="Tekaia F."/>
            <person name="Badcock K."/>
            <person name="Basham D."/>
            <person name="Brown D."/>
            <person name="Chillingworth T."/>
            <person name="Connor R."/>
            <person name="Davies R.M."/>
            <person name="Devlin K."/>
            <person name="Feltwell T."/>
            <person name="Gentles S."/>
            <person name="Hamlin N."/>
            <person name="Holroyd S."/>
            <person name="Hornsby T."/>
            <person name="Jagels K."/>
            <person name="Krogh A."/>
            <person name="McLean J."/>
            <person name="Moule S."/>
            <person name="Murphy L.D."/>
            <person name="Oliver S."/>
            <person name="Osborne J."/>
            <person name="Quail M.A."/>
            <person name="Rajandream M.A."/>
            <person name="Rogers J."/>
            <person name="Rutter S."/>
            <person name="Seeger K."/>
            <person name="Skelton S."/>
            <person name="Squares S."/>
            <person name="Squares R."/>
            <person name="Sulston J.E."/>
            <person name="Taylor K."/>
            <person name="Whitehead S."/>
            <person name="Barrell B.G."/>
        </authorList>
    </citation>
    <scope>NUCLEOTIDE SEQUENCE [LARGE SCALE GENOMIC DNA]</scope>
    <source>
        <strain>ATCC 25618 / H37Rv</strain>
    </source>
</reference>
<reference key="2">
    <citation type="journal article" date="2011" name="Mol. Cell. Proteomics">
        <title>Proteogenomic analysis of Mycobacterium tuberculosis by high resolution mass spectrometry.</title>
        <authorList>
            <person name="Kelkar D.S."/>
            <person name="Kumar D."/>
            <person name="Kumar P."/>
            <person name="Balakrishnan L."/>
            <person name="Muthusamy B."/>
            <person name="Yadav A.K."/>
            <person name="Shrivastava P."/>
            <person name="Marimuthu A."/>
            <person name="Anand S."/>
            <person name="Sundaram H."/>
            <person name="Kingsbury R."/>
            <person name="Harsha H.C."/>
            <person name="Nair B."/>
            <person name="Prasad T.S."/>
            <person name="Chauhan D.S."/>
            <person name="Katoch K."/>
            <person name="Katoch V.M."/>
            <person name="Kumar P."/>
            <person name="Chaerkady R."/>
            <person name="Ramachandran S."/>
            <person name="Dash D."/>
            <person name="Pandey A."/>
        </authorList>
    </citation>
    <scope>IDENTIFICATION BY MASS SPECTROMETRY [LARGE SCALE ANALYSIS]</scope>
    <source>
        <strain>ATCC 25618 / H37Rv</strain>
    </source>
</reference>
<reference key="3">
    <citation type="journal article" date="2024" name="Nat. Commun.">
        <title>Mycobacterial biotin synthases require an auxiliary protein to convert dethiobiotin into biotin.</title>
        <authorList>
            <person name="Qu D."/>
            <person name="Ge P."/>
            <person name="Botella L."/>
            <person name="Park S.W."/>
            <person name="Lee H.N."/>
            <person name="Thornton N."/>
            <person name="Bean J.M."/>
            <person name="Krieger I.V."/>
            <person name="Sacchettini J.C."/>
            <person name="Ehrt S."/>
            <person name="Aldrich C.C."/>
            <person name="Schnappinger D."/>
        </authorList>
    </citation>
    <scope>FUNCTION</scope>
    <scope>COFACTOR</scope>
    <scope>DISRUPTION PHENOTYPE</scope>
    <source>
        <strain>H37Rv</strain>
    </source>
</reference>
<sequence>MVEIVAGKQRAPVAAGVYNVYTGELADTATPTAARMGLEPPRFCAQCGRRMVVQVRPDGWWARCSRHGQVDSADLATQR</sequence>
<name>BSAP_MYCTU</name>
<proteinExistence type="evidence at protein level"/>
<keyword id="KW-0093">Biotin biosynthesis</keyword>
<keyword id="KW-0408">Iron</keyword>
<keyword id="KW-0411">Iron-sulfur</keyword>
<keyword id="KW-0479">Metal-binding</keyword>
<keyword id="KW-1185">Reference proteome</keyword>
<evidence type="ECO:0000269" key="1">
    <source>
    </source>
</evidence>
<evidence type="ECO:0000303" key="2">
    <source>
    </source>
</evidence>
<evidence type="ECO:0000305" key="3"/>
<evidence type="ECO:0000305" key="4">
    <source>
    </source>
</evidence>
<protein>
    <recommendedName>
        <fullName evidence="2">Biotin synthase auxiliary protein</fullName>
    </recommendedName>
</protein>
<comment type="function">
    <text evidence="1">Required for the activity of the biotin synthase BioB.</text>
</comment>
<comment type="cofactor">
    <cofactor evidence="4">
        <name>iron-sulfur cluster</name>
        <dbReference type="ChEBI" id="CHEBI:30408"/>
    </cofactor>
    <text evidence="1">Probably contains an unusual Fe-S cluster.</text>
</comment>
<comment type="disruption phenotype">
    <text evidence="1">The deletion mutant is unable to grow without extrabacterial biotin (PubMed:38755122). The growth defect of the deletion mutant in biotin-free media can be complemented with biotin but not with another intermediate of the biotin synthesis pathway (PubMed:38755122).</text>
</comment>
<comment type="similarity">
    <text evidence="3">Belongs to the BsaP family.</text>
</comment>
<gene>
    <name evidence="2" type="primary">bsaP</name>
    <name type="ordered locus">Rv1590</name>
    <name type="ORF">MTCY336.14c</name>
</gene>
<organism>
    <name type="scientific">Mycobacterium tuberculosis (strain ATCC 25618 / H37Rv)</name>
    <dbReference type="NCBI Taxonomy" id="83332"/>
    <lineage>
        <taxon>Bacteria</taxon>
        <taxon>Bacillati</taxon>
        <taxon>Actinomycetota</taxon>
        <taxon>Actinomycetes</taxon>
        <taxon>Mycobacteriales</taxon>
        <taxon>Mycobacteriaceae</taxon>
        <taxon>Mycobacterium</taxon>
        <taxon>Mycobacterium tuberculosis complex</taxon>
    </lineage>
</organism>
<feature type="chain" id="PRO_0000103888" description="Biotin synthase auxiliary protein">
    <location>
        <begin position="1"/>
        <end position="79"/>
    </location>
</feature>
<accession>P9WLT7</accession>
<accession>L0T9W1</accession>
<accession>O06600</accession>
<accession>P64881</accession>
<dbReference type="EMBL" id="AL123456">
    <property type="protein sequence ID" value="CCP44354.1"/>
    <property type="molecule type" value="Genomic_DNA"/>
</dbReference>
<dbReference type="PIR" id="H70542">
    <property type="entry name" value="H70542"/>
</dbReference>
<dbReference type="RefSeq" id="NP_216106.1">
    <property type="nucleotide sequence ID" value="NC_000962.3"/>
</dbReference>
<dbReference type="RefSeq" id="WP_003407914.1">
    <property type="nucleotide sequence ID" value="NZ_NVQJ01000016.1"/>
</dbReference>
<dbReference type="STRING" id="83332.Rv1590"/>
<dbReference type="PaxDb" id="83332-Rv1590"/>
<dbReference type="DNASU" id="886292"/>
<dbReference type="GeneID" id="886292"/>
<dbReference type="KEGG" id="mtu:Rv1590"/>
<dbReference type="KEGG" id="mtv:RVBD_1590"/>
<dbReference type="TubercuList" id="Rv1590"/>
<dbReference type="eggNOG" id="ENOG5033ASY">
    <property type="taxonomic scope" value="Bacteria"/>
</dbReference>
<dbReference type="InParanoid" id="P9WLT7"/>
<dbReference type="OrthoDB" id="3829284at2"/>
<dbReference type="Proteomes" id="UP000001584">
    <property type="component" value="Chromosome"/>
</dbReference>
<dbReference type="GO" id="GO:0051536">
    <property type="term" value="F:iron-sulfur cluster binding"/>
    <property type="evidence" value="ECO:0007669"/>
    <property type="project" value="UniProtKB-KW"/>
</dbReference>
<dbReference type="GO" id="GO:0046872">
    <property type="term" value="F:metal ion binding"/>
    <property type="evidence" value="ECO:0007669"/>
    <property type="project" value="UniProtKB-KW"/>
</dbReference>
<dbReference type="GO" id="GO:0009102">
    <property type="term" value="P:biotin biosynthetic process"/>
    <property type="evidence" value="ECO:0007669"/>
    <property type="project" value="UniProtKB-KW"/>
</dbReference>
<dbReference type="GO" id="GO:0052167">
    <property type="term" value="P:symbiont-mediated perturbation of host innate immune response"/>
    <property type="evidence" value="ECO:0000314"/>
    <property type="project" value="MTBBASE"/>
</dbReference>